<name>RL17_DROYA</name>
<protein>
    <recommendedName>
        <fullName evidence="2">Large ribosomal subunit protein uL22</fullName>
    </recommendedName>
    <alternativeName>
        <fullName>60S ribosomal protein L17</fullName>
    </alternativeName>
</protein>
<evidence type="ECO:0000256" key="1">
    <source>
        <dbReference type="SAM" id="MobiDB-lite"/>
    </source>
</evidence>
<evidence type="ECO:0000305" key="2"/>
<dbReference type="EMBL" id="AY231666">
    <property type="protein sequence ID" value="AAR09689.1"/>
    <property type="molecule type" value="mRNA"/>
</dbReference>
<dbReference type="EMBL" id="AY232017">
    <property type="protein sequence ID" value="AAR10040.1"/>
    <property type="molecule type" value="mRNA"/>
</dbReference>
<dbReference type="EMBL" id="CM000162">
    <property type="protein sequence ID" value="EDX01041.1"/>
    <property type="molecule type" value="Genomic_DNA"/>
</dbReference>
<dbReference type="SMR" id="Q6XJ13"/>
<dbReference type="EnsemblMetazoa" id="FBtr0262966">
    <property type="protein sequence ID" value="FBpp0261458"/>
    <property type="gene ID" value="FBgn0068331"/>
</dbReference>
<dbReference type="EnsemblMetazoa" id="FBtr0393347">
    <property type="protein sequence ID" value="FBpp0352733"/>
    <property type="gene ID" value="FBgn0068331"/>
</dbReference>
<dbReference type="EnsemblMetazoa" id="FBtr0402830">
    <property type="protein sequence ID" value="FBpp0361652"/>
    <property type="gene ID" value="FBgn0068331"/>
</dbReference>
<dbReference type="EnsemblMetazoa" id="XM_002099897.3">
    <property type="protein sequence ID" value="XP_002099933.1"/>
    <property type="gene ID" value="LOC6524064"/>
</dbReference>
<dbReference type="EnsemblMetazoa" id="XM_015189990.2">
    <property type="protein sequence ID" value="XP_015045476.1"/>
    <property type="gene ID" value="LOC6524064"/>
</dbReference>
<dbReference type="EnsemblMetazoa" id="XM_015189991.2">
    <property type="protein sequence ID" value="XP_015045477.1"/>
    <property type="gene ID" value="LOC6524064"/>
</dbReference>
<dbReference type="EnsemblMetazoa" id="XM_039374746.1">
    <property type="protein sequence ID" value="XP_039230680.1"/>
    <property type="gene ID" value="LOC6524064"/>
</dbReference>
<dbReference type="GeneID" id="6524064"/>
<dbReference type="KEGG" id="dya:Dyak_GE16448"/>
<dbReference type="CTD" id="6139"/>
<dbReference type="eggNOG" id="KOG3353">
    <property type="taxonomic scope" value="Eukaryota"/>
</dbReference>
<dbReference type="HOGENOM" id="CLU_083987_0_1_1"/>
<dbReference type="OMA" id="QVNHAPC"/>
<dbReference type="OrthoDB" id="10254664at2759"/>
<dbReference type="PhylomeDB" id="Q6XJ13"/>
<dbReference type="ChiTaRS" id="RpL17">
    <property type="organism name" value="fly"/>
</dbReference>
<dbReference type="Proteomes" id="UP000002282">
    <property type="component" value="Chromosome X"/>
</dbReference>
<dbReference type="GO" id="GO:0022625">
    <property type="term" value="C:cytosolic large ribosomal subunit"/>
    <property type="evidence" value="ECO:0007669"/>
    <property type="project" value="TreeGrafter"/>
</dbReference>
<dbReference type="GO" id="GO:0003735">
    <property type="term" value="F:structural constituent of ribosome"/>
    <property type="evidence" value="ECO:0007669"/>
    <property type="project" value="EnsemblMetazoa"/>
</dbReference>
<dbReference type="GO" id="GO:0002181">
    <property type="term" value="P:cytoplasmic translation"/>
    <property type="evidence" value="ECO:0007669"/>
    <property type="project" value="TreeGrafter"/>
</dbReference>
<dbReference type="CDD" id="cd00336">
    <property type="entry name" value="Ribosomal_L22"/>
    <property type="match status" value="1"/>
</dbReference>
<dbReference type="FunFam" id="3.90.470.10:FF:000003">
    <property type="entry name" value="60S ribosomal protein L17"/>
    <property type="match status" value="1"/>
</dbReference>
<dbReference type="Gene3D" id="3.90.470.10">
    <property type="entry name" value="Ribosomal protein L22/L17"/>
    <property type="match status" value="1"/>
</dbReference>
<dbReference type="InterPro" id="IPR001063">
    <property type="entry name" value="Ribosomal_uL22"/>
</dbReference>
<dbReference type="InterPro" id="IPR018260">
    <property type="entry name" value="Ribosomal_uL22_CS"/>
</dbReference>
<dbReference type="InterPro" id="IPR005721">
    <property type="entry name" value="Ribosomal_uL22_euk/arc"/>
</dbReference>
<dbReference type="InterPro" id="IPR036394">
    <property type="entry name" value="Ribosomal_uL22_sf"/>
</dbReference>
<dbReference type="NCBIfam" id="NF003260">
    <property type="entry name" value="PRK04223.1"/>
    <property type="match status" value="1"/>
</dbReference>
<dbReference type="NCBIfam" id="TIGR01038">
    <property type="entry name" value="uL22_arch_euk"/>
    <property type="match status" value="1"/>
</dbReference>
<dbReference type="PANTHER" id="PTHR11593">
    <property type="entry name" value="60S RIBOSOMAL PROTEIN L17"/>
    <property type="match status" value="1"/>
</dbReference>
<dbReference type="PANTHER" id="PTHR11593:SF10">
    <property type="entry name" value="60S RIBOSOMAL PROTEIN L17"/>
    <property type="match status" value="1"/>
</dbReference>
<dbReference type="Pfam" id="PF00237">
    <property type="entry name" value="Ribosomal_L22"/>
    <property type="match status" value="1"/>
</dbReference>
<dbReference type="SUPFAM" id="SSF54843">
    <property type="entry name" value="Ribosomal protein L22"/>
    <property type="match status" value="1"/>
</dbReference>
<dbReference type="PROSITE" id="PS00464">
    <property type="entry name" value="RIBOSOMAL_L22"/>
    <property type="match status" value="1"/>
</dbReference>
<reference key="1">
    <citation type="journal article" date="2003" name="Genome Res.">
        <title>An evolutionary analysis of orphan genes in Drosophila.</title>
        <authorList>
            <person name="Domazet-Loso T."/>
            <person name="Tautz D."/>
        </authorList>
    </citation>
    <scope>NUCLEOTIDE SEQUENCE [MRNA]</scope>
</reference>
<reference key="2">
    <citation type="journal article" date="2007" name="Nature">
        <title>Evolution of genes and genomes on the Drosophila phylogeny.</title>
        <authorList>
            <consortium name="Drosophila 12 genomes consortium"/>
        </authorList>
    </citation>
    <scope>NUCLEOTIDE SEQUENCE [LARGE SCALE GENOMIC DNA]</scope>
    <source>
        <strain>Tai18E2 / Tucson 14021-0261.01</strain>
    </source>
</reference>
<accession>Q6XJ13</accession>
<accession>B4PZ74</accession>
<accession>Q6XI15</accession>
<organism>
    <name type="scientific">Drosophila yakuba</name>
    <name type="common">Fruit fly</name>
    <dbReference type="NCBI Taxonomy" id="7245"/>
    <lineage>
        <taxon>Eukaryota</taxon>
        <taxon>Metazoa</taxon>
        <taxon>Ecdysozoa</taxon>
        <taxon>Arthropoda</taxon>
        <taxon>Hexapoda</taxon>
        <taxon>Insecta</taxon>
        <taxon>Pterygota</taxon>
        <taxon>Neoptera</taxon>
        <taxon>Endopterygota</taxon>
        <taxon>Diptera</taxon>
        <taxon>Brachycera</taxon>
        <taxon>Muscomorpha</taxon>
        <taxon>Ephydroidea</taxon>
        <taxon>Drosophilidae</taxon>
        <taxon>Drosophila</taxon>
        <taxon>Sophophora</taxon>
    </lineage>
</organism>
<sequence>MGRYSRESDNVAKSCKARGPNLRVHFKNTHETAQAIKRMPLRRAQRYLKAVIDQKECVPFRRFNGGVGRCAQAKQWKTTQGRWPKKSAEFLLQLLRNAEANADCKGLDADRLVVHHIQVNRAQCLRRRTYRAHGRINPYMSSPCHVEVILTEKEEVVSKATDDEPTKKKLSKKKLQRQKEKMLRSE</sequence>
<keyword id="KW-0687">Ribonucleoprotein</keyword>
<keyword id="KW-0689">Ribosomal protein</keyword>
<proteinExistence type="evidence at transcript level"/>
<comment type="similarity">
    <text evidence="2">Belongs to the universal ribosomal protein uL22 family.</text>
</comment>
<gene>
    <name type="primary">RpL17</name>
    <name type="ORF">GE16448</name>
</gene>
<feature type="chain" id="PRO_0000323414" description="Large ribosomal subunit protein uL22">
    <location>
        <begin position="1"/>
        <end position="186"/>
    </location>
</feature>
<feature type="region of interest" description="Disordered" evidence="1">
    <location>
        <begin position="157"/>
        <end position="186"/>
    </location>
</feature>
<feature type="compositionally biased region" description="Basic and acidic residues" evidence="1">
    <location>
        <begin position="157"/>
        <end position="167"/>
    </location>
</feature>
<feature type="compositionally biased region" description="Basic and acidic residues" evidence="1">
    <location>
        <begin position="177"/>
        <end position="186"/>
    </location>
</feature>